<name>TX128_LYCSI</name>
<dbReference type="EMBL" id="EU925951">
    <property type="protein sequence ID" value="ACI41283.1"/>
    <property type="molecule type" value="mRNA"/>
</dbReference>
<dbReference type="EMBL" id="FM863955">
    <property type="protein sequence ID" value="CAS03553.1"/>
    <property type="molecule type" value="mRNA"/>
</dbReference>
<dbReference type="SMR" id="B6DCL7"/>
<dbReference type="ArachnoServer" id="AS000900">
    <property type="toxin name" value="U1-lycotoxin-Ls1n"/>
</dbReference>
<dbReference type="GO" id="GO:0005576">
    <property type="term" value="C:extracellular region"/>
    <property type="evidence" value="ECO:0007669"/>
    <property type="project" value="UniProtKB-SubCell"/>
</dbReference>
<dbReference type="GO" id="GO:0090729">
    <property type="term" value="F:toxin activity"/>
    <property type="evidence" value="ECO:0007669"/>
    <property type="project" value="UniProtKB-KW"/>
</dbReference>
<dbReference type="InterPro" id="IPR019553">
    <property type="entry name" value="Spider_toxin_CSTX_knottin"/>
</dbReference>
<dbReference type="InterPro" id="IPR011142">
    <property type="entry name" value="Spider_toxin_CSTX_Knottin_CS"/>
</dbReference>
<dbReference type="Pfam" id="PF10530">
    <property type="entry name" value="Toxin_35"/>
    <property type="match status" value="1"/>
</dbReference>
<dbReference type="PROSITE" id="PS60029">
    <property type="entry name" value="SPIDER_CSTX"/>
    <property type="match status" value="1"/>
</dbReference>
<proteinExistence type="evidence at transcript level"/>
<organism>
    <name type="scientific">Lycosa singoriensis</name>
    <name type="common">Wolf spider</name>
    <name type="synonym">Aranea singoriensis</name>
    <dbReference type="NCBI Taxonomy" id="434756"/>
    <lineage>
        <taxon>Eukaryota</taxon>
        <taxon>Metazoa</taxon>
        <taxon>Ecdysozoa</taxon>
        <taxon>Arthropoda</taxon>
        <taxon>Chelicerata</taxon>
        <taxon>Arachnida</taxon>
        <taxon>Araneae</taxon>
        <taxon>Araneomorphae</taxon>
        <taxon>Entelegynae</taxon>
        <taxon>Lycosoidea</taxon>
        <taxon>Lycosidae</taxon>
        <taxon>Lycosa</taxon>
    </lineage>
</organism>
<evidence type="ECO:0000250" key="1"/>
<evidence type="ECO:0000255" key="2"/>
<evidence type="ECO:0000305" key="3"/>
<accession>B6DCL7</accession>
<reference key="1">
    <citation type="journal article" date="2010" name="Zoology">
        <title>Transcriptome analysis of the venom glands of the Chinese wolf spider Lycosa singoriensis.</title>
        <authorList>
            <person name="Zhang Y."/>
            <person name="Chen J."/>
            <person name="Tang X."/>
            <person name="Wang F."/>
            <person name="Jiang L."/>
            <person name="Xiong X."/>
            <person name="Wang M."/>
            <person name="Rong M."/>
            <person name="Liu Z."/>
            <person name="Liang S."/>
        </authorList>
    </citation>
    <scope>NUCLEOTIDE SEQUENCE [LARGE SCALE MRNA]</scope>
    <source>
        <tissue>Venom gland</tissue>
    </source>
</reference>
<comment type="subcellular location">
    <subcellularLocation>
        <location evidence="1">Secreted</location>
    </subcellularLocation>
</comment>
<comment type="tissue specificity">
    <text>Expressed by the venom gland.</text>
</comment>
<comment type="domain">
    <text evidence="1">The presence of a 'disulfide through disulfide knot' structurally defines this protein as a knottin.</text>
</comment>
<comment type="similarity">
    <text evidence="3">Belongs to the neurotoxin 19 (CSTX) family. 04 (U1-Lctx) subfamily.</text>
</comment>
<feature type="signal peptide" evidence="2">
    <location>
        <begin position="1"/>
        <end position="20"/>
    </location>
</feature>
<feature type="propeptide" id="PRO_0000401551" evidence="1">
    <location>
        <begin position="21"/>
        <end position="41"/>
    </location>
</feature>
<feature type="chain" id="PRO_0000401552" description="U1-lycotoxin-Ls1n">
    <location>
        <begin position="42"/>
        <end position="107"/>
    </location>
</feature>
<feature type="disulfide bond" evidence="1">
    <location>
        <begin position="44"/>
        <end position="59"/>
    </location>
</feature>
<feature type="disulfide bond" evidence="1">
    <location>
        <begin position="51"/>
        <end position="68"/>
    </location>
</feature>
<feature type="disulfide bond" evidence="1">
    <location>
        <begin position="58"/>
        <end position="86"/>
    </location>
</feature>
<feature type="disulfide bond" evidence="1">
    <location>
        <begin position="70"/>
        <end position="84"/>
    </location>
</feature>
<keyword id="KW-1015">Disulfide bond</keyword>
<keyword id="KW-0960">Knottin</keyword>
<keyword id="KW-0964">Secreted</keyword>
<keyword id="KW-0732">Signal</keyword>
<keyword id="KW-0800">Toxin</keyword>
<sequence length="107" mass="11872">MMKVLVVVALLVTLISYSSSEGIDDLEADELLSLMANEQTRKECIPKHHECTSNKHGCCRGNFFKYKCQCTTVVTQDGEQTERCFCGTPSHHKAAELVVGFGKKIFG</sequence>
<protein>
    <recommendedName>
        <fullName>U1-lycotoxin-Ls1n</fullName>
    </recommendedName>
    <alternativeName>
        <fullName>Toxin-like structure LSTX-A28</fullName>
    </alternativeName>
</protein>